<accession>B7I3R5</accession>
<reference key="1">
    <citation type="journal article" date="2008" name="J. Bacteriol.">
        <title>Comparative genome sequence analysis of multidrug-resistant Acinetobacter baumannii.</title>
        <authorList>
            <person name="Adams M.D."/>
            <person name="Goglin K."/>
            <person name="Molyneaux N."/>
            <person name="Hujer K.M."/>
            <person name="Lavender H."/>
            <person name="Jamison J.J."/>
            <person name="MacDonald I.J."/>
            <person name="Martin K.M."/>
            <person name="Russo T."/>
            <person name="Campagnari A.A."/>
            <person name="Hujer A.M."/>
            <person name="Bonomo R.A."/>
            <person name="Gill S.R."/>
        </authorList>
    </citation>
    <scope>NUCLEOTIDE SEQUENCE [LARGE SCALE GENOMIC DNA]</scope>
    <source>
        <strain>AB0057</strain>
    </source>
</reference>
<sequence>MSGSTITPWVVGNWKMNPMRANANQLIEEFKQLLQQNQIADENCHVGVAPVSIALTTVQAQLQDAARTVHTVAQDVSRVAGTGAYTGEVSAELLKDSQINFVLVGHSERRDIFGDNVEILKAKLQNALNAGMTVIYCVGESLEQREQGQAEQVVLQQICDIAPVVTAEQWQNQVVIAYEPIWAIGTGKTASPQDAQAMHAKIREGLCQLTPAGSNIAILYGGSVKAENAVELAACPDINGALVGGASLKAASFYQIVQAFAQSK</sequence>
<organism>
    <name type="scientific">Acinetobacter baumannii (strain AB0057)</name>
    <dbReference type="NCBI Taxonomy" id="480119"/>
    <lineage>
        <taxon>Bacteria</taxon>
        <taxon>Pseudomonadati</taxon>
        <taxon>Pseudomonadota</taxon>
        <taxon>Gammaproteobacteria</taxon>
        <taxon>Moraxellales</taxon>
        <taxon>Moraxellaceae</taxon>
        <taxon>Acinetobacter</taxon>
        <taxon>Acinetobacter calcoaceticus/baumannii complex</taxon>
    </lineage>
</organism>
<evidence type="ECO:0000255" key="1">
    <source>
        <dbReference type="HAMAP-Rule" id="MF_00147"/>
    </source>
</evidence>
<gene>
    <name evidence="1" type="primary">tpiA</name>
    <name type="ordered locus">AB57_0411</name>
</gene>
<keyword id="KW-0963">Cytoplasm</keyword>
<keyword id="KW-0312">Gluconeogenesis</keyword>
<keyword id="KW-0324">Glycolysis</keyword>
<keyword id="KW-0413">Isomerase</keyword>
<comment type="function">
    <text evidence="1">Involved in the gluconeogenesis. Catalyzes stereospecifically the conversion of dihydroxyacetone phosphate (DHAP) to D-glyceraldehyde-3-phosphate (G3P).</text>
</comment>
<comment type="catalytic activity">
    <reaction evidence="1">
        <text>D-glyceraldehyde 3-phosphate = dihydroxyacetone phosphate</text>
        <dbReference type="Rhea" id="RHEA:18585"/>
        <dbReference type="ChEBI" id="CHEBI:57642"/>
        <dbReference type="ChEBI" id="CHEBI:59776"/>
        <dbReference type="EC" id="5.3.1.1"/>
    </reaction>
</comment>
<comment type="pathway">
    <text evidence="1">Carbohydrate biosynthesis; gluconeogenesis.</text>
</comment>
<comment type="pathway">
    <text evidence="1">Carbohydrate degradation; glycolysis; D-glyceraldehyde 3-phosphate from glycerone phosphate: step 1/1.</text>
</comment>
<comment type="subunit">
    <text evidence="1">Homodimer.</text>
</comment>
<comment type="subcellular location">
    <subcellularLocation>
        <location evidence="1">Cytoplasm</location>
    </subcellularLocation>
</comment>
<comment type="similarity">
    <text evidence="1">Belongs to the triosephosphate isomerase family.</text>
</comment>
<dbReference type="EC" id="5.3.1.1" evidence="1"/>
<dbReference type="EMBL" id="CP001182">
    <property type="protein sequence ID" value="ACJ39837.1"/>
    <property type="molecule type" value="Genomic_DNA"/>
</dbReference>
<dbReference type="RefSeq" id="WP_000016931.1">
    <property type="nucleotide sequence ID" value="NC_011586.2"/>
</dbReference>
<dbReference type="SMR" id="B7I3R5"/>
<dbReference type="KEGG" id="abn:AB57_0411"/>
<dbReference type="HOGENOM" id="CLU_024251_2_1_6"/>
<dbReference type="UniPathway" id="UPA00109">
    <property type="reaction ID" value="UER00189"/>
</dbReference>
<dbReference type="UniPathway" id="UPA00138"/>
<dbReference type="Proteomes" id="UP000007094">
    <property type="component" value="Chromosome"/>
</dbReference>
<dbReference type="GO" id="GO:0005829">
    <property type="term" value="C:cytosol"/>
    <property type="evidence" value="ECO:0007669"/>
    <property type="project" value="TreeGrafter"/>
</dbReference>
<dbReference type="GO" id="GO:0004807">
    <property type="term" value="F:triose-phosphate isomerase activity"/>
    <property type="evidence" value="ECO:0007669"/>
    <property type="project" value="UniProtKB-UniRule"/>
</dbReference>
<dbReference type="GO" id="GO:0006094">
    <property type="term" value="P:gluconeogenesis"/>
    <property type="evidence" value="ECO:0007669"/>
    <property type="project" value="UniProtKB-UniRule"/>
</dbReference>
<dbReference type="GO" id="GO:0046166">
    <property type="term" value="P:glyceraldehyde-3-phosphate biosynthetic process"/>
    <property type="evidence" value="ECO:0007669"/>
    <property type="project" value="TreeGrafter"/>
</dbReference>
<dbReference type="GO" id="GO:0019563">
    <property type="term" value="P:glycerol catabolic process"/>
    <property type="evidence" value="ECO:0007669"/>
    <property type="project" value="TreeGrafter"/>
</dbReference>
<dbReference type="GO" id="GO:0006096">
    <property type="term" value="P:glycolytic process"/>
    <property type="evidence" value="ECO:0007669"/>
    <property type="project" value="UniProtKB-UniRule"/>
</dbReference>
<dbReference type="CDD" id="cd00311">
    <property type="entry name" value="TIM"/>
    <property type="match status" value="1"/>
</dbReference>
<dbReference type="FunFam" id="3.20.20.70:FF:000016">
    <property type="entry name" value="Triosephosphate isomerase"/>
    <property type="match status" value="1"/>
</dbReference>
<dbReference type="Gene3D" id="3.20.20.70">
    <property type="entry name" value="Aldolase class I"/>
    <property type="match status" value="1"/>
</dbReference>
<dbReference type="HAMAP" id="MF_00147_B">
    <property type="entry name" value="TIM_B"/>
    <property type="match status" value="1"/>
</dbReference>
<dbReference type="InterPro" id="IPR013785">
    <property type="entry name" value="Aldolase_TIM"/>
</dbReference>
<dbReference type="InterPro" id="IPR035990">
    <property type="entry name" value="TIM_sf"/>
</dbReference>
<dbReference type="InterPro" id="IPR022896">
    <property type="entry name" value="TrioseP_Isoase_bac/euk"/>
</dbReference>
<dbReference type="InterPro" id="IPR000652">
    <property type="entry name" value="Triosephosphate_isomerase"/>
</dbReference>
<dbReference type="InterPro" id="IPR020861">
    <property type="entry name" value="Triosephosphate_isomerase_AS"/>
</dbReference>
<dbReference type="NCBIfam" id="TIGR00419">
    <property type="entry name" value="tim"/>
    <property type="match status" value="1"/>
</dbReference>
<dbReference type="PANTHER" id="PTHR21139">
    <property type="entry name" value="TRIOSEPHOSPHATE ISOMERASE"/>
    <property type="match status" value="1"/>
</dbReference>
<dbReference type="PANTHER" id="PTHR21139:SF42">
    <property type="entry name" value="TRIOSEPHOSPHATE ISOMERASE"/>
    <property type="match status" value="1"/>
</dbReference>
<dbReference type="Pfam" id="PF00121">
    <property type="entry name" value="TIM"/>
    <property type="match status" value="1"/>
</dbReference>
<dbReference type="SUPFAM" id="SSF51351">
    <property type="entry name" value="Triosephosphate isomerase (TIM)"/>
    <property type="match status" value="1"/>
</dbReference>
<dbReference type="PROSITE" id="PS00171">
    <property type="entry name" value="TIM_1"/>
    <property type="match status" value="1"/>
</dbReference>
<dbReference type="PROSITE" id="PS51440">
    <property type="entry name" value="TIM_2"/>
    <property type="match status" value="1"/>
</dbReference>
<name>TPIS_ACIB5</name>
<feature type="chain" id="PRO_1000117992" description="Triosephosphate isomerase">
    <location>
        <begin position="1"/>
        <end position="264"/>
    </location>
</feature>
<feature type="active site" description="Electrophile" evidence="1">
    <location>
        <position position="106"/>
    </location>
</feature>
<feature type="active site" description="Proton acceptor" evidence="1">
    <location>
        <position position="179"/>
    </location>
</feature>
<feature type="binding site" evidence="1">
    <location>
        <begin position="13"/>
        <end position="15"/>
    </location>
    <ligand>
        <name>substrate</name>
    </ligand>
</feature>
<feature type="binding site" evidence="1">
    <location>
        <position position="185"/>
    </location>
    <ligand>
        <name>substrate</name>
    </ligand>
</feature>
<feature type="binding site" evidence="1">
    <location>
        <position position="223"/>
    </location>
    <ligand>
        <name>substrate</name>
    </ligand>
</feature>
<feature type="binding site" evidence="1">
    <location>
        <begin position="244"/>
        <end position="245"/>
    </location>
    <ligand>
        <name>substrate</name>
    </ligand>
</feature>
<protein>
    <recommendedName>
        <fullName evidence="1">Triosephosphate isomerase</fullName>
        <shortName evidence="1">TIM</shortName>
        <shortName evidence="1">TPI</shortName>
        <ecNumber evidence="1">5.3.1.1</ecNumber>
    </recommendedName>
    <alternativeName>
        <fullName evidence="1">Triose-phosphate isomerase</fullName>
    </alternativeName>
</protein>
<proteinExistence type="inferred from homology"/>